<feature type="chain" id="PRO_1000137043" description="Protein Syd">
    <location>
        <begin position="1"/>
        <end position="181"/>
    </location>
</feature>
<proteinExistence type="inferred from homology"/>
<organism>
    <name type="scientific">Shigella boydii serotype 18 (strain CDC 3083-94 / BS512)</name>
    <dbReference type="NCBI Taxonomy" id="344609"/>
    <lineage>
        <taxon>Bacteria</taxon>
        <taxon>Pseudomonadati</taxon>
        <taxon>Pseudomonadota</taxon>
        <taxon>Gammaproteobacteria</taxon>
        <taxon>Enterobacterales</taxon>
        <taxon>Enterobacteriaceae</taxon>
        <taxon>Shigella</taxon>
    </lineage>
</organism>
<accession>B2TZE0</accession>
<evidence type="ECO:0000255" key="1">
    <source>
        <dbReference type="HAMAP-Rule" id="MF_01104"/>
    </source>
</evidence>
<dbReference type="EMBL" id="CP001063">
    <property type="protein sequence ID" value="ACD07090.1"/>
    <property type="molecule type" value="Genomic_DNA"/>
</dbReference>
<dbReference type="RefSeq" id="WP_000342438.1">
    <property type="nucleotide sequence ID" value="NC_010658.1"/>
</dbReference>
<dbReference type="SMR" id="B2TZE0"/>
<dbReference type="STRING" id="344609.SbBS512_E3079"/>
<dbReference type="KEGG" id="sbc:SbBS512_E3079"/>
<dbReference type="HOGENOM" id="CLU_121866_0_0_6"/>
<dbReference type="Proteomes" id="UP000001030">
    <property type="component" value="Chromosome"/>
</dbReference>
<dbReference type="GO" id="GO:0009898">
    <property type="term" value="C:cytoplasmic side of plasma membrane"/>
    <property type="evidence" value="ECO:0007669"/>
    <property type="project" value="InterPro"/>
</dbReference>
<dbReference type="CDD" id="cd16323">
    <property type="entry name" value="Syd"/>
    <property type="match status" value="1"/>
</dbReference>
<dbReference type="FunFam" id="3.40.1580.20:FF:000001">
    <property type="entry name" value="Protein Syd"/>
    <property type="match status" value="1"/>
</dbReference>
<dbReference type="Gene3D" id="3.40.1580.20">
    <property type="entry name" value="Syd protein"/>
    <property type="match status" value="1"/>
</dbReference>
<dbReference type="HAMAP" id="MF_01104">
    <property type="entry name" value="Syd"/>
    <property type="match status" value="1"/>
</dbReference>
<dbReference type="InterPro" id="IPR009948">
    <property type="entry name" value="Syd"/>
</dbReference>
<dbReference type="InterPro" id="IPR038228">
    <property type="entry name" value="Syd_sf"/>
</dbReference>
<dbReference type="NCBIfam" id="NF003439">
    <property type="entry name" value="PRK04968.1"/>
    <property type="match status" value="1"/>
</dbReference>
<dbReference type="Pfam" id="PF07348">
    <property type="entry name" value="Syd"/>
    <property type="match status" value="1"/>
</dbReference>
<keyword id="KW-0997">Cell inner membrane</keyword>
<keyword id="KW-1003">Cell membrane</keyword>
<keyword id="KW-0472">Membrane</keyword>
<keyword id="KW-1185">Reference proteome</keyword>
<reference key="1">
    <citation type="submission" date="2008-05" db="EMBL/GenBank/DDBJ databases">
        <title>Complete sequence of Shigella boydii serotype 18 strain BS512.</title>
        <authorList>
            <person name="Rasko D.A."/>
            <person name="Rosovitz M."/>
            <person name="Maurelli A.T."/>
            <person name="Myers G."/>
            <person name="Seshadri R."/>
            <person name="Cer R."/>
            <person name="Jiang L."/>
            <person name="Ravel J."/>
            <person name="Sebastian Y."/>
        </authorList>
    </citation>
    <scope>NUCLEOTIDE SEQUENCE [LARGE SCALE GENOMIC DNA]</scope>
    <source>
        <strain>CDC 3083-94 / BS512</strain>
    </source>
</reference>
<comment type="function">
    <text evidence="1">Interacts with the SecY protein in vivo. May bind preferentially to an uncomplexed state of SecY, thus functioning either as a chelating agent for excess SecY in the cell or as a regulatory factor that negatively controls the translocase function.</text>
</comment>
<comment type="subcellular location">
    <subcellularLocation>
        <location evidence="1">Cell inner membrane</location>
        <topology evidence="1">Peripheral membrane protein</topology>
        <orientation evidence="1">Cytoplasmic side</orientation>
    </subcellularLocation>
    <text evidence="1">Loosely associated with the cytoplasmic side of the inner membrane, probably via SecY.</text>
</comment>
<comment type="similarity">
    <text evidence="1">Belongs to the Syd family.</text>
</comment>
<sequence length="181" mass="20698">MDDLTAQALKDFTARYCDAWHEEHKSWPLSEELYGVPSPCIISTTEDAVYWQPQPFTGEQNVNAVERAFDIVIQSTIHTFYTTQFAGDMHAQFGDIKLTLLQTWSEDDFRRVQENLIGHLVTQKRLKLPPTLFIATLEEELEVISVCNLSGEVCKETLGTRKRTHLASNLAEFLNQLKPLL</sequence>
<protein>
    <recommendedName>
        <fullName evidence="1">Protein Syd</fullName>
    </recommendedName>
</protein>
<gene>
    <name evidence="1" type="primary">syd</name>
    <name type="ordered locus">SbBS512_E3079</name>
</gene>
<name>SYDP_SHIB3</name>